<keyword id="KW-1185">Reference proteome</keyword>
<keyword id="KW-0677">Repeat</keyword>
<proteinExistence type="inferred from homology"/>
<evidence type="ECO:0000305" key="1"/>
<accession>Q9S7F4</accession>
<organism>
    <name type="scientific">Arabidopsis thaliana</name>
    <name type="common">Mouse-ear cress</name>
    <dbReference type="NCBI Taxonomy" id="3702"/>
    <lineage>
        <taxon>Eukaryota</taxon>
        <taxon>Viridiplantae</taxon>
        <taxon>Streptophyta</taxon>
        <taxon>Embryophyta</taxon>
        <taxon>Tracheophyta</taxon>
        <taxon>Spermatophyta</taxon>
        <taxon>Magnoliopsida</taxon>
        <taxon>eudicotyledons</taxon>
        <taxon>Gunneridae</taxon>
        <taxon>Pentapetalae</taxon>
        <taxon>rosids</taxon>
        <taxon>malvids</taxon>
        <taxon>Brassicales</taxon>
        <taxon>Brassicaceae</taxon>
        <taxon>Camelineae</taxon>
        <taxon>Arabidopsis</taxon>
    </lineage>
</organism>
<dbReference type="EMBL" id="AC010797">
    <property type="protein sequence ID" value="AAF03451.1"/>
    <property type="molecule type" value="Genomic_DNA"/>
</dbReference>
<dbReference type="EMBL" id="AC011664">
    <property type="protein sequence ID" value="AAF14834.1"/>
    <property type="molecule type" value="Genomic_DNA"/>
</dbReference>
<dbReference type="EMBL" id="CP002686">
    <property type="protein sequence ID" value="AEE73749.1"/>
    <property type="molecule type" value="Genomic_DNA"/>
</dbReference>
<dbReference type="RefSeq" id="NP_186850.1">
    <property type="nucleotide sequence ID" value="NM_111067.2"/>
</dbReference>
<dbReference type="SMR" id="Q9S7F4"/>
<dbReference type="STRING" id="3702.Q9S7F4"/>
<dbReference type="PaxDb" id="3702-AT3G02010.1"/>
<dbReference type="ProteomicsDB" id="249167"/>
<dbReference type="EnsemblPlants" id="AT3G02010.1">
    <property type="protein sequence ID" value="AT3G02010.1"/>
    <property type="gene ID" value="AT3G02010"/>
</dbReference>
<dbReference type="GeneID" id="821085"/>
<dbReference type="Gramene" id="AT3G02010.1">
    <property type="protein sequence ID" value="AT3G02010.1"/>
    <property type="gene ID" value="AT3G02010"/>
</dbReference>
<dbReference type="KEGG" id="ath:AT3G02010"/>
<dbReference type="Araport" id="AT3G02010"/>
<dbReference type="TAIR" id="AT3G02010"/>
<dbReference type="eggNOG" id="KOG4197">
    <property type="taxonomic scope" value="Eukaryota"/>
</dbReference>
<dbReference type="HOGENOM" id="CLU_002706_15_6_1"/>
<dbReference type="InParanoid" id="Q9S7F4"/>
<dbReference type="OMA" id="SWVEIKH"/>
<dbReference type="PhylomeDB" id="Q9S7F4"/>
<dbReference type="PRO" id="PR:Q9S7F4"/>
<dbReference type="Proteomes" id="UP000006548">
    <property type="component" value="Chromosome 3"/>
</dbReference>
<dbReference type="ExpressionAtlas" id="Q9S7F4">
    <property type="expression patterns" value="baseline and differential"/>
</dbReference>
<dbReference type="GO" id="GO:0003723">
    <property type="term" value="F:RNA binding"/>
    <property type="evidence" value="ECO:0007669"/>
    <property type="project" value="InterPro"/>
</dbReference>
<dbReference type="GO" id="GO:0008270">
    <property type="term" value="F:zinc ion binding"/>
    <property type="evidence" value="ECO:0007669"/>
    <property type="project" value="InterPro"/>
</dbReference>
<dbReference type="GO" id="GO:0009451">
    <property type="term" value="P:RNA modification"/>
    <property type="evidence" value="ECO:0007669"/>
    <property type="project" value="InterPro"/>
</dbReference>
<dbReference type="FunFam" id="1.25.40.10:FF:000957">
    <property type="entry name" value="Pentatricopeptide repeat-containing protein At4g39530"/>
    <property type="match status" value="1"/>
</dbReference>
<dbReference type="FunFam" id="1.25.40.10:FF:000958">
    <property type="entry name" value="Pentatricopeptide repeat-containing protein At4g39530"/>
    <property type="match status" value="1"/>
</dbReference>
<dbReference type="FunFam" id="1.25.40.10:FF:000031">
    <property type="entry name" value="Pentatricopeptide repeat-containing protein mitochondrial"/>
    <property type="match status" value="1"/>
</dbReference>
<dbReference type="FunFam" id="1.25.40.10:FF:001404">
    <property type="entry name" value="Putative pentatricopeptide repeat-containing protein"/>
    <property type="match status" value="1"/>
</dbReference>
<dbReference type="FunFam" id="1.25.40.10:FF:001790">
    <property type="entry name" value="Putative pentatricopeptide repeat-containing protein At2g01510"/>
    <property type="match status" value="1"/>
</dbReference>
<dbReference type="Gene3D" id="1.25.40.10">
    <property type="entry name" value="Tetratricopeptide repeat domain"/>
    <property type="match status" value="6"/>
</dbReference>
<dbReference type="InterPro" id="IPR032867">
    <property type="entry name" value="DYW_dom"/>
</dbReference>
<dbReference type="InterPro" id="IPR046848">
    <property type="entry name" value="E_motif"/>
</dbReference>
<dbReference type="InterPro" id="IPR002885">
    <property type="entry name" value="Pentatricopeptide_rpt"/>
</dbReference>
<dbReference type="InterPro" id="IPR046960">
    <property type="entry name" value="PPR_At4g14850-like_plant"/>
</dbReference>
<dbReference type="InterPro" id="IPR011990">
    <property type="entry name" value="TPR-like_helical_dom_sf"/>
</dbReference>
<dbReference type="NCBIfam" id="TIGR00756">
    <property type="entry name" value="PPR"/>
    <property type="match status" value="7"/>
</dbReference>
<dbReference type="PANTHER" id="PTHR47926:SF475">
    <property type="entry name" value="DYW DOMAIN-CONTAINING PROTEIN"/>
    <property type="match status" value="1"/>
</dbReference>
<dbReference type="PANTHER" id="PTHR47926">
    <property type="entry name" value="PENTATRICOPEPTIDE REPEAT-CONTAINING PROTEIN"/>
    <property type="match status" value="1"/>
</dbReference>
<dbReference type="Pfam" id="PF14432">
    <property type="entry name" value="DYW_deaminase"/>
    <property type="match status" value="1"/>
</dbReference>
<dbReference type="Pfam" id="PF20431">
    <property type="entry name" value="E_motif"/>
    <property type="match status" value="1"/>
</dbReference>
<dbReference type="Pfam" id="PF01535">
    <property type="entry name" value="PPR"/>
    <property type="match status" value="5"/>
</dbReference>
<dbReference type="Pfam" id="PF13041">
    <property type="entry name" value="PPR_2"/>
    <property type="match status" value="4"/>
</dbReference>
<dbReference type="PROSITE" id="PS51375">
    <property type="entry name" value="PPR"/>
    <property type="match status" value="14"/>
</dbReference>
<sequence length="825" mass="92376">MKLYCNSNEVRSRTLATLRQLRQPSPATFLDTRRVDARIIKTGFDTDTCRSNFIVEDLLRRGQVSAARKVYDEMPHKNTVSTNTMISGHVKTGDVSSARDLFDAMPDRTVVTWTILMGWYARNSHFDEAFKLFRQMCRSSSCTLPDHVTFTTLLPGCNDAVPQNAVGQVHAFAVKLGFDTNPFLTVSNVLLKSYCEVRRLDLACVLFEEIPEKDSVTFNTLITGYEKDGLYTESIHLFLKMRQSGHQPSDFTFSGVLKAVVGLHDFALGQQLHALSVTTGFSRDASVGNQILDFYSKHDRVLETRMLFDEMPELDFVSYNVVISSYSQADQYEASLHFFREMQCMGFDRRNFPFATMLSIAANLSSLQMGRQLHCQALLATADSILHVGNSLVDMYAKCEMFEEAELIFKSLPQRTTVSWTALISGYVQKGLHGAGLKLFTKMRGSNLRADQSTFATVLKASASFASLLLGKQLHAFIIRSGNLENVFSGSGLVDMYAKCGSIKDAVQVFEEMPDRNAVSWNALISAHADNGDGEAAIGAFAKMIESGLQPDSVSILGVLTACSHCGFVEQGTEYFQAMSPIYGITPKKKHYACMLDLLGRNGRFAEAEKLMDEMPFEPDEIMWSSVLNACRIHKNQSLAERAAEKLFSMEKLRDAAAYVSMSNIYAAAGEWEKVRDVKKAMRERGIKKVPAYSWVEVNHKIHVFSSNDQTHPNGDEIVRKINELTAEIEREGYKPDTSSVVQDVDEQMKIESLKYHSERLAVAFALISTPEGCPIVVMKNLRACRDCHAAIKLISKIVKREITVRDTSRFHHFSEGVCSCGDYW</sequence>
<feature type="chain" id="PRO_0000356065" description="Putative pentatricopeptide repeat-containing protein At2g01510">
    <location>
        <begin position="1"/>
        <end position="825"/>
    </location>
</feature>
<feature type="repeat" description="PPR 1">
    <location>
        <begin position="47"/>
        <end position="77"/>
    </location>
</feature>
<feature type="repeat" description="PPR 2">
    <location>
        <begin position="78"/>
        <end position="108"/>
    </location>
</feature>
<feature type="repeat" description="PPR 3">
    <location>
        <begin position="109"/>
        <end position="143"/>
    </location>
</feature>
<feature type="repeat" description="PPR 4">
    <location>
        <begin position="146"/>
        <end position="180"/>
    </location>
</feature>
<feature type="repeat" description="PPR 5">
    <location>
        <begin position="183"/>
        <end position="213"/>
    </location>
</feature>
<feature type="repeat" description="PPR 6">
    <location>
        <begin position="214"/>
        <end position="248"/>
    </location>
</feature>
<feature type="repeat" description="PPR 7">
    <location>
        <begin position="249"/>
        <end position="283"/>
    </location>
</feature>
<feature type="repeat" description="PPR 8">
    <location>
        <begin position="284"/>
        <end position="314"/>
    </location>
</feature>
<feature type="repeat" description="PPR 9">
    <location>
        <begin position="315"/>
        <end position="349"/>
    </location>
</feature>
<feature type="repeat" description="PPR 10">
    <location>
        <begin position="350"/>
        <end position="384"/>
    </location>
</feature>
<feature type="repeat" description="PPR 11">
    <location>
        <begin position="385"/>
        <end position="415"/>
    </location>
</feature>
<feature type="repeat" description="PPR 12">
    <location>
        <begin position="416"/>
        <end position="450"/>
    </location>
</feature>
<feature type="repeat" description="PPR 13">
    <location>
        <begin position="451"/>
        <end position="485"/>
    </location>
</feature>
<feature type="repeat" description="PPR 14">
    <location>
        <begin position="486"/>
        <end position="516"/>
    </location>
</feature>
<feature type="repeat" description="PPR 15">
    <location>
        <begin position="517"/>
        <end position="551"/>
    </location>
</feature>
<feature type="repeat" description="PPR 16">
    <location>
        <begin position="552"/>
        <end position="587"/>
    </location>
</feature>
<feature type="repeat" description="PPR 17">
    <location>
        <begin position="588"/>
        <end position="618"/>
    </location>
</feature>
<feature type="region of interest" description="Type E motif">
    <location>
        <begin position="623"/>
        <end position="699"/>
    </location>
</feature>
<feature type="region of interest" description="Type E(+) motif">
    <location>
        <begin position="700"/>
        <end position="730"/>
    </location>
</feature>
<feature type="region of interest" description="Type DYW motif">
    <location>
        <begin position="731"/>
        <end position="825"/>
    </location>
</feature>
<name>PP206_ARATH</name>
<gene>
    <name type="primary">PCMP-H36</name>
    <name type="ordered locus">At3g02010</name>
    <name type="ORF">F1C9.21</name>
    <name type="ORF">F28J7.34</name>
</gene>
<protein>
    <recommendedName>
        <fullName>Putative pentatricopeptide repeat-containing protein At2g01510</fullName>
    </recommendedName>
</protein>
<comment type="similarity">
    <text evidence="1">Belongs to the PPR family. PCMP-H subfamily.</text>
</comment>
<comment type="online information" name="Pentatricopeptide repeat proteins">
    <link uri="https://ppr.plantenergy.uwa.edu.au"/>
</comment>
<reference key="1">
    <citation type="journal article" date="2000" name="Nature">
        <title>Sequence and analysis of chromosome 3 of the plant Arabidopsis thaliana.</title>
        <authorList>
            <person name="Salanoubat M."/>
            <person name="Lemcke K."/>
            <person name="Rieger M."/>
            <person name="Ansorge W."/>
            <person name="Unseld M."/>
            <person name="Fartmann B."/>
            <person name="Valle G."/>
            <person name="Bloecker H."/>
            <person name="Perez-Alonso M."/>
            <person name="Obermaier B."/>
            <person name="Delseny M."/>
            <person name="Boutry M."/>
            <person name="Grivell L.A."/>
            <person name="Mache R."/>
            <person name="Puigdomenech P."/>
            <person name="De Simone V."/>
            <person name="Choisne N."/>
            <person name="Artiguenave F."/>
            <person name="Robert C."/>
            <person name="Brottier P."/>
            <person name="Wincker P."/>
            <person name="Cattolico L."/>
            <person name="Weissenbach J."/>
            <person name="Saurin W."/>
            <person name="Quetier F."/>
            <person name="Schaefer M."/>
            <person name="Mueller-Auer S."/>
            <person name="Gabel C."/>
            <person name="Fuchs M."/>
            <person name="Benes V."/>
            <person name="Wurmbach E."/>
            <person name="Drzonek H."/>
            <person name="Erfle H."/>
            <person name="Jordan N."/>
            <person name="Bangert S."/>
            <person name="Wiedelmann R."/>
            <person name="Kranz H."/>
            <person name="Voss H."/>
            <person name="Holland R."/>
            <person name="Brandt P."/>
            <person name="Nyakatura G."/>
            <person name="Vezzi A."/>
            <person name="D'Angelo M."/>
            <person name="Pallavicini A."/>
            <person name="Toppo S."/>
            <person name="Simionati B."/>
            <person name="Conrad A."/>
            <person name="Hornischer K."/>
            <person name="Kauer G."/>
            <person name="Loehnert T.-H."/>
            <person name="Nordsiek G."/>
            <person name="Reichelt J."/>
            <person name="Scharfe M."/>
            <person name="Schoen O."/>
            <person name="Bargues M."/>
            <person name="Terol J."/>
            <person name="Climent J."/>
            <person name="Navarro P."/>
            <person name="Collado C."/>
            <person name="Perez-Perez A."/>
            <person name="Ottenwaelder B."/>
            <person name="Duchemin D."/>
            <person name="Cooke R."/>
            <person name="Laudie M."/>
            <person name="Berger-Llauro C."/>
            <person name="Purnelle B."/>
            <person name="Masuy D."/>
            <person name="de Haan M."/>
            <person name="Maarse A.C."/>
            <person name="Alcaraz J.-P."/>
            <person name="Cottet A."/>
            <person name="Casacuberta E."/>
            <person name="Monfort A."/>
            <person name="Argiriou A."/>
            <person name="Flores M."/>
            <person name="Liguori R."/>
            <person name="Vitale D."/>
            <person name="Mannhaupt G."/>
            <person name="Haase D."/>
            <person name="Schoof H."/>
            <person name="Rudd S."/>
            <person name="Zaccaria P."/>
            <person name="Mewes H.-W."/>
            <person name="Mayer K.F.X."/>
            <person name="Kaul S."/>
            <person name="Town C.D."/>
            <person name="Koo H.L."/>
            <person name="Tallon L.J."/>
            <person name="Jenkins J."/>
            <person name="Rooney T."/>
            <person name="Rizzo M."/>
            <person name="Walts A."/>
            <person name="Utterback T."/>
            <person name="Fujii C.Y."/>
            <person name="Shea T.P."/>
            <person name="Creasy T.H."/>
            <person name="Haas B."/>
            <person name="Maiti R."/>
            <person name="Wu D."/>
            <person name="Peterson J."/>
            <person name="Van Aken S."/>
            <person name="Pai G."/>
            <person name="Militscher J."/>
            <person name="Sellers P."/>
            <person name="Gill J.E."/>
            <person name="Feldblyum T.V."/>
            <person name="Preuss D."/>
            <person name="Lin X."/>
            <person name="Nierman W.C."/>
            <person name="Salzberg S.L."/>
            <person name="White O."/>
            <person name="Venter J.C."/>
            <person name="Fraser C.M."/>
            <person name="Kaneko T."/>
            <person name="Nakamura Y."/>
            <person name="Sato S."/>
            <person name="Kato T."/>
            <person name="Asamizu E."/>
            <person name="Sasamoto S."/>
            <person name="Kimura T."/>
            <person name="Idesawa K."/>
            <person name="Kawashima K."/>
            <person name="Kishida Y."/>
            <person name="Kiyokawa C."/>
            <person name="Kohara M."/>
            <person name="Matsumoto M."/>
            <person name="Matsuno A."/>
            <person name="Muraki A."/>
            <person name="Nakayama S."/>
            <person name="Nakazaki N."/>
            <person name="Shinpo S."/>
            <person name="Takeuchi C."/>
            <person name="Wada T."/>
            <person name="Watanabe A."/>
            <person name="Yamada M."/>
            <person name="Yasuda M."/>
            <person name="Tabata S."/>
        </authorList>
    </citation>
    <scope>NUCLEOTIDE SEQUENCE [LARGE SCALE GENOMIC DNA]</scope>
    <source>
        <strain>cv. Columbia</strain>
    </source>
</reference>
<reference key="2">
    <citation type="journal article" date="2017" name="Plant J.">
        <title>Araport11: a complete reannotation of the Arabidopsis thaliana reference genome.</title>
        <authorList>
            <person name="Cheng C.Y."/>
            <person name="Krishnakumar V."/>
            <person name="Chan A.P."/>
            <person name="Thibaud-Nissen F."/>
            <person name="Schobel S."/>
            <person name="Town C.D."/>
        </authorList>
    </citation>
    <scope>GENOME REANNOTATION</scope>
    <source>
        <strain>cv. Columbia</strain>
    </source>
</reference>
<reference key="3">
    <citation type="journal article" date="2004" name="Plant Cell">
        <title>Genome-wide analysis of Arabidopsis pentatricopeptide repeat proteins reveals their essential role in organelle biogenesis.</title>
        <authorList>
            <person name="Lurin C."/>
            <person name="Andres C."/>
            <person name="Aubourg S."/>
            <person name="Bellaoui M."/>
            <person name="Bitton F."/>
            <person name="Bruyere C."/>
            <person name="Caboche M."/>
            <person name="Debast C."/>
            <person name="Gualberto J."/>
            <person name="Hoffmann B."/>
            <person name="Lecharny A."/>
            <person name="Le Ret M."/>
            <person name="Martin-Magniette M.-L."/>
            <person name="Mireau H."/>
            <person name="Peeters N."/>
            <person name="Renou J.-P."/>
            <person name="Szurek B."/>
            <person name="Taconnat L."/>
            <person name="Small I."/>
        </authorList>
    </citation>
    <scope>GENE FAMILY</scope>
</reference>